<keyword id="KW-0963">Cytoplasm</keyword>
<keyword id="KW-0570">Pentose shunt</keyword>
<keyword id="KW-1185">Reference proteome</keyword>
<keyword id="KW-0704">Schiff base</keyword>
<keyword id="KW-0808">Transferase</keyword>
<protein>
    <recommendedName>
        <fullName evidence="1">Probable transaldolase</fullName>
        <ecNumber evidence="1">2.2.1.2</ecNumber>
    </recommendedName>
</protein>
<sequence>MKFFVDTADLAEIRDLAATGLLDGVTTNPSLVARTGRPFVDLVAEICDVVSGPVSAEVAATDAETMLKEGRHLARIAPNVAVKVPLTPAGLKVCRTLANEGTMVNVTLCFSAAQAILAAKAGAAFVSPFVGRLDDIGQTGLNLIAEIVEIYDRYPAFTTEVLVASIRNPTHVTESARLGAHVATMPPAVIRQLFAHPLTDKGLSQFVADWQKTGQNILEQAIPDRSGQDRA</sequence>
<gene>
    <name evidence="1" type="primary">tal</name>
    <name type="ordered locus">RC1_2255</name>
</gene>
<reference key="1">
    <citation type="submission" date="2007-03" db="EMBL/GenBank/DDBJ databases">
        <title>Genome sequence of Rhodospirillum centenum.</title>
        <authorList>
            <person name="Touchman J.W."/>
            <person name="Bauer C."/>
            <person name="Blankenship R.E."/>
        </authorList>
    </citation>
    <scope>NUCLEOTIDE SEQUENCE [LARGE SCALE GENOMIC DNA]</scope>
    <source>
        <strain>ATCC 51521 / SW</strain>
    </source>
</reference>
<feature type="chain" id="PRO_1000126347" description="Probable transaldolase">
    <location>
        <begin position="1"/>
        <end position="231"/>
    </location>
</feature>
<feature type="active site" description="Schiff-base intermediate with substrate" evidence="1">
    <location>
        <position position="83"/>
    </location>
</feature>
<comment type="function">
    <text evidence="1">Transaldolase is important for the balance of metabolites in the pentose-phosphate pathway.</text>
</comment>
<comment type="catalytic activity">
    <reaction evidence="1">
        <text>D-sedoheptulose 7-phosphate + D-glyceraldehyde 3-phosphate = D-erythrose 4-phosphate + beta-D-fructose 6-phosphate</text>
        <dbReference type="Rhea" id="RHEA:17053"/>
        <dbReference type="ChEBI" id="CHEBI:16897"/>
        <dbReference type="ChEBI" id="CHEBI:57483"/>
        <dbReference type="ChEBI" id="CHEBI:57634"/>
        <dbReference type="ChEBI" id="CHEBI:59776"/>
        <dbReference type="EC" id="2.2.1.2"/>
    </reaction>
</comment>
<comment type="pathway">
    <text evidence="1">Carbohydrate degradation; pentose phosphate pathway; D-glyceraldehyde 3-phosphate and beta-D-fructose 6-phosphate from D-ribose 5-phosphate and D-xylulose 5-phosphate (non-oxidative stage): step 2/3.</text>
</comment>
<comment type="subcellular location">
    <subcellularLocation>
        <location evidence="1">Cytoplasm</location>
    </subcellularLocation>
</comment>
<comment type="similarity">
    <text evidence="1">Belongs to the transaldolase family. Type 3B subfamily.</text>
</comment>
<organism>
    <name type="scientific">Rhodospirillum centenum (strain ATCC 51521 / SW)</name>
    <dbReference type="NCBI Taxonomy" id="414684"/>
    <lineage>
        <taxon>Bacteria</taxon>
        <taxon>Pseudomonadati</taxon>
        <taxon>Pseudomonadota</taxon>
        <taxon>Alphaproteobacteria</taxon>
        <taxon>Rhodospirillales</taxon>
        <taxon>Rhodospirillaceae</taxon>
        <taxon>Rhodospirillum</taxon>
    </lineage>
</organism>
<proteinExistence type="inferred from homology"/>
<dbReference type="EC" id="2.2.1.2" evidence="1"/>
<dbReference type="EMBL" id="CP000613">
    <property type="protein sequence ID" value="ACI99642.1"/>
    <property type="molecule type" value="Genomic_DNA"/>
</dbReference>
<dbReference type="RefSeq" id="WP_012567427.1">
    <property type="nucleotide sequence ID" value="NC_011420.2"/>
</dbReference>
<dbReference type="SMR" id="B6IPE0"/>
<dbReference type="STRING" id="414684.RC1_2255"/>
<dbReference type="KEGG" id="rce:RC1_2255"/>
<dbReference type="eggNOG" id="COG0176">
    <property type="taxonomic scope" value="Bacteria"/>
</dbReference>
<dbReference type="HOGENOM" id="CLU_079764_0_0_5"/>
<dbReference type="OrthoDB" id="9807051at2"/>
<dbReference type="UniPathway" id="UPA00115">
    <property type="reaction ID" value="UER00414"/>
</dbReference>
<dbReference type="Proteomes" id="UP000001591">
    <property type="component" value="Chromosome"/>
</dbReference>
<dbReference type="GO" id="GO:0005737">
    <property type="term" value="C:cytoplasm"/>
    <property type="evidence" value="ECO:0007669"/>
    <property type="project" value="UniProtKB-SubCell"/>
</dbReference>
<dbReference type="GO" id="GO:0016832">
    <property type="term" value="F:aldehyde-lyase activity"/>
    <property type="evidence" value="ECO:0007669"/>
    <property type="project" value="InterPro"/>
</dbReference>
<dbReference type="GO" id="GO:0004801">
    <property type="term" value="F:transaldolase activity"/>
    <property type="evidence" value="ECO:0007669"/>
    <property type="project" value="UniProtKB-UniRule"/>
</dbReference>
<dbReference type="GO" id="GO:0005975">
    <property type="term" value="P:carbohydrate metabolic process"/>
    <property type="evidence" value="ECO:0007669"/>
    <property type="project" value="InterPro"/>
</dbReference>
<dbReference type="GO" id="GO:0006098">
    <property type="term" value="P:pentose-phosphate shunt"/>
    <property type="evidence" value="ECO:0007669"/>
    <property type="project" value="UniProtKB-UniRule"/>
</dbReference>
<dbReference type="CDD" id="cd00956">
    <property type="entry name" value="Transaldolase_FSA"/>
    <property type="match status" value="1"/>
</dbReference>
<dbReference type="FunFam" id="3.20.20.70:FF:000018">
    <property type="entry name" value="Probable transaldolase"/>
    <property type="match status" value="1"/>
</dbReference>
<dbReference type="Gene3D" id="3.20.20.70">
    <property type="entry name" value="Aldolase class I"/>
    <property type="match status" value="1"/>
</dbReference>
<dbReference type="HAMAP" id="MF_00494">
    <property type="entry name" value="Transaldolase_3b"/>
    <property type="match status" value="1"/>
</dbReference>
<dbReference type="InterPro" id="IPR013785">
    <property type="entry name" value="Aldolase_TIM"/>
</dbReference>
<dbReference type="InterPro" id="IPR001585">
    <property type="entry name" value="TAL/FSA"/>
</dbReference>
<dbReference type="InterPro" id="IPR022999">
    <property type="entry name" value="Transaldolase_3B"/>
</dbReference>
<dbReference type="InterPro" id="IPR004731">
    <property type="entry name" value="Transaldolase_3B/F6P_aldolase"/>
</dbReference>
<dbReference type="InterPro" id="IPR018225">
    <property type="entry name" value="Transaldolase_AS"/>
</dbReference>
<dbReference type="InterPro" id="IPR033919">
    <property type="entry name" value="TSA/FSA_arc/bac"/>
</dbReference>
<dbReference type="NCBIfam" id="TIGR00875">
    <property type="entry name" value="fsa_talC_mipB"/>
    <property type="match status" value="1"/>
</dbReference>
<dbReference type="PANTHER" id="PTHR10683:SF40">
    <property type="entry name" value="FRUCTOSE-6-PHOSPHATE ALDOLASE 1-RELATED"/>
    <property type="match status" value="1"/>
</dbReference>
<dbReference type="PANTHER" id="PTHR10683">
    <property type="entry name" value="TRANSALDOLASE"/>
    <property type="match status" value="1"/>
</dbReference>
<dbReference type="Pfam" id="PF00923">
    <property type="entry name" value="TAL_FSA"/>
    <property type="match status" value="1"/>
</dbReference>
<dbReference type="SUPFAM" id="SSF51569">
    <property type="entry name" value="Aldolase"/>
    <property type="match status" value="1"/>
</dbReference>
<dbReference type="PROSITE" id="PS01054">
    <property type="entry name" value="TRANSALDOLASE_1"/>
    <property type="match status" value="1"/>
</dbReference>
<dbReference type="PROSITE" id="PS00958">
    <property type="entry name" value="TRANSALDOLASE_2"/>
    <property type="match status" value="1"/>
</dbReference>
<name>TAL_RHOCS</name>
<accession>B6IPE0</accession>
<evidence type="ECO:0000255" key="1">
    <source>
        <dbReference type="HAMAP-Rule" id="MF_00494"/>
    </source>
</evidence>